<gene>
    <name type="ordered locus">Msed_1645</name>
</gene>
<feature type="chain" id="PRO_0000364117" description="Arginine decarboxylase beta chain" evidence="1">
    <location>
        <begin position="1"/>
        <end position="75"/>
    </location>
</feature>
<feature type="chain" id="PRO_0000364118" description="Arginine decarboxylase alpha chain" evidence="1">
    <location>
        <begin position="76"/>
        <end position="128"/>
    </location>
</feature>
<feature type="active site" description="Schiff-base intermediate with substrate; via pyruvic acid" evidence="1">
    <location>
        <position position="76"/>
    </location>
</feature>
<feature type="active site" description="Proton acceptor; for processing activity" evidence="1">
    <location>
        <position position="81"/>
    </location>
</feature>
<feature type="active site" description="Proton donor; for catalytic activity" evidence="1">
    <location>
        <position position="96"/>
    </location>
</feature>
<feature type="site" description="Cleavage (non-hydrolytic); by autolysis" evidence="1">
    <location>
        <begin position="75"/>
        <end position="76"/>
    </location>
</feature>
<feature type="modified residue" description="Pyruvic acid (Ser); by autocatalysis" evidence="1">
    <location>
        <position position="76"/>
    </location>
</feature>
<organism>
    <name type="scientific">Metallosphaera sedula (strain ATCC 51363 / DSM 5348 / JCM 9185 / NBRC 15509 / TH2)</name>
    <dbReference type="NCBI Taxonomy" id="399549"/>
    <lineage>
        <taxon>Archaea</taxon>
        <taxon>Thermoproteota</taxon>
        <taxon>Thermoprotei</taxon>
        <taxon>Sulfolobales</taxon>
        <taxon>Sulfolobaceae</taxon>
        <taxon>Metallosphaera</taxon>
    </lineage>
</organism>
<comment type="function">
    <text evidence="1">Specifically catalyzes the decarboxylation of L-arginine to agmatine. Has no S-adenosylmethionine decarboxylase (AdoMetDC) activity.</text>
</comment>
<comment type="catalytic activity">
    <reaction evidence="1">
        <text>L-arginine + H(+) = agmatine + CO2</text>
        <dbReference type="Rhea" id="RHEA:17641"/>
        <dbReference type="ChEBI" id="CHEBI:15378"/>
        <dbReference type="ChEBI" id="CHEBI:16526"/>
        <dbReference type="ChEBI" id="CHEBI:32682"/>
        <dbReference type="ChEBI" id="CHEBI:58145"/>
        <dbReference type="EC" id="4.1.1.19"/>
    </reaction>
</comment>
<comment type="cofactor">
    <cofactor evidence="1">
        <name>pyruvate</name>
        <dbReference type="ChEBI" id="CHEBI:15361"/>
    </cofactor>
    <text evidence="1">Binds 1 pyruvoyl group covalently per subunit.</text>
</comment>
<comment type="pathway">
    <text evidence="1">Amine and polyamine biosynthesis; agmatine biosynthesis; agmatine from L-arginine: step 1/1.</text>
</comment>
<comment type="subunit">
    <text evidence="1">Heterooctamer of four alpha and four beta chains arranged as a tetramer of alpha/beta heterodimers.</text>
</comment>
<comment type="PTM">
    <text evidence="1">Is synthesized initially as an inactive proenzyme. Formation of the active enzyme involves a self-maturation process in which the active site pyruvoyl group is generated from an internal serine residue via an autocatalytic post-translational modification. Two non-identical subunits are generated from the proenzyme in this reaction, and the pyruvate is formed at the N-terminus of the alpha chain, which is derived from the carboxyl end of the proenzyme. The post-translation cleavage follows an unusual pathway, termed non-hydrolytic serinolysis, in which the side chain hydroxyl group of the serine supplies its oxygen atom to form the C-terminus of the beta chain, while the remainder of the serine residue undergoes an oxidative deamination to produce ammonia and the pyruvoyl group blocking the N-terminus of the alpha chain.</text>
</comment>
<comment type="similarity">
    <text evidence="1">Belongs to the prokaryotic AdoMetDC family. Type 1 subfamily.</text>
</comment>
<protein>
    <recommendedName>
        <fullName evidence="1">Arginine decarboxylase proenzyme</fullName>
        <shortName evidence="1">ADC</shortName>
        <shortName evidence="1">ArgDC</shortName>
        <ecNumber evidence="1">4.1.1.19</ecNumber>
    </recommendedName>
    <alternativeName>
        <fullName evidence="1">Pyruvoyl-dependent arginine decarboxylase</fullName>
    </alternativeName>
    <component>
        <recommendedName>
            <fullName evidence="1">Arginine decarboxylase beta chain</fullName>
        </recommendedName>
    </component>
    <component>
        <recommendedName>
            <fullName evidence="1">Arginine decarboxylase alpha chain</fullName>
        </recommendedName>
    </component>
</protein>
<sequence length="128" mass="14523">MSEQVTFQSHEDRIVGKHVFGNLYDIDPEDLNNEQLLKDLVLKAVEIAHMNLVEAKSWSFGGKKGGVSVIALIEESHIALHTWNEYNYATLDVYTCGEDSDPQAAFKFIVEALKPRRYQVFFADRSSS</sequence>
<keyword id="KW-0068">Autocatalytic cleavage</keyword>
<keyword id="KW-0210">Decarboxylase</keyword>
<keyword id="KW-0456">Lyase</keyword>
<keyword id="KW-0620">Polyamine biosynthesis</keyword>
<keyword id="KW-0670">Pyruvate</keyword>
<keyword id="KW-1185">Reference proteome</keyword>
<keyword id="KW-0704">Schiff base</keyword>
<keyword id="KW-0865">Zymogen</keyword>
<reference key="1">
    <citation type="journal article" date="2008" name="Appl. Environ. Microbiol.">
        <title>The genome sequence of the metal-mobilizing, extremely thermoacidophilic archaeon Metallosphaera sedula provides insights into bioleaching-associated metabolism.</title>
        <authorList>
            <person name="Auernik K.S."/>
            <person name="Maezato Y."/>
            <person name="Blum P.H."/>
            <person name="Kelly R.M."/>
        </authorList>
    </citation>
    <scope>NUCLEOTIDE SEQUENCE [LARGE SCALE GENOMIC DNA]</scope>
    <source>
        <strain>ATCC 51363 / DSM 5348 / JCM 9185 / NBRC 15509 / TH2</strain>
    </source>
</reference>
<proteinExistence type="inferred from homology"/>
<name>ARGDC_METS5</name>
<evidence type="ECO:0000255" key="1">
    <source>
        <dbReference type="HAMAP-Rule" id="MF_01298"/>
    </source>
</evidence>
<accession>A4YH98</accession>
<dbReference type="EC" id="4.1.1.19" evidence="1"/>
<dbReference type="EMBL" id="CP000682">
    <property type="protein sequence ID" value="ABP95800.1"/>
    <property type="molecule type" value="Genomic_DNA"/>
</dbReference>
<dbReference type="RefSeq" id="WP_012021587.1">
    <property type="nucleotide sequence ID" value="NC_009440.1"/>
</dbReference>
<dbReference type="SMR" id="A4YH98"/>
<dbReference type="STRING" id="399549.Msed_1645"/>
<dbReference type="GeneID" id="91756153"/>
<dbReference type="KEGG" id="mse:Msed_1645"/>
<dbReference type="eggNOG" id="arCOG00279">
    <property type="taxonomic scope" value="Archaea"/>
</dbReference>
<dbReference type="HOGENOM" id="CLU_125470_2_1_2"/>
<dbReference type="UniPathway" id="UPA00186">
    <property type="reaction ID" value="UER00284"/>
</dbReference>
<dbReference type="Proteomes" id="UP000000242">
    <property type="component" value="Chromosome"/>
</dbReference>
<dbReference type="GO" id="GO:0005829">
    <property type="term" value="C:cytosol"/>
    <property type="evidence" value="ECO:0007669"/>
    <property type="project" value="TreeGrafter"/>
</dbReference>
<dbReference type="GO" id="GO:0008792">
    <property type="term" value="F:arginine decarboxylase activity"/>
    <property type="evidence" value="ECO:0007669"/>
    <property type="project" value="UniProtKB-UniRule"/>
</dbReference>
<dbReference type="GO" id="GO:0006527">
    <property type="term" value="P:arginine catabolic process"/>
    <property type="evidence" value="ECO:0007669"/>
    <property type="project" value="UniProtKB-UniRule"/>
</dbReference>
<dbReference type="GO" id="GO:0006596">
    <property type="term" value="P:polyamine biosynthetic process"/>
    <property type="evidence" value="ECO:0007669"/>
    <property type="project" value="UniProtKB-UniRule"/>
</dbReference>
<dbReference type="FunFam" id="3.60.90.10:FF:000005">
    <property type="entry name" value="Arginine decarboxylase proenzyme"/>
    <property type="match status" value="1"/>
</dbReference>
<dbReference type="Gene3D" id="3.60.90.10">
    <property type="entry name" value="S-adenosylmethionine decarboxylase"/>
    <property type="match status" value="1"/>
</dbReference>
<dbReference type="HAMAP" id="MF_00464">
    <property type="entry name" value="AdoMetDC_1"/>
    <property type="match status" value="1"/>
</dbReference>
<dbReference type="HAMAP" id="MF_01298">
    <property type="entry name" value="ArgDC"/>
    <property type="match status" value="1"/>
</dbReference>
<dbReference type="InterPro" id="IPR003826">
    <property type="entry name" value="AdoMetDC_fam_prok"/>
</dbReference>
<dbReference type="InterPro" id="IPR027549">
    <property type="entry name" value="ArgDC"/>
</dbReference>
<dbReference type="InterPro" id="IPR016067">
    <property type="entry name" value="S-AdoMet_deCO2ase_core"/>
</dbReference>
<dbReference type="InterPro" id="IPR017716">
    <property type="entry name" value="S-AdoMet_deCOase_pro-enz"/>
</dbReference>
<dbReference type="NCBIfam" id="TIGR03330">
    <property type="entry name" value="SAM_DCase_Bsu"/>
    <property type="match status" value="1"/>
</dbReference>
<dbReference type="PANTHER" id="PTHR33866">
    <property type="entry name" value="S-ADENOSYLMETHIONINE DECARBOXYLASE PROENZYME"/>
    <property type="match status" value="1"/>
</dbReference>
<dbReference type="PANTHER" id="PTHR33866:SF2">
    <property type="entry name" value="S-ADENOSYLMETHIONINE DECARBOXYLASE PROENZYME"/>
    <property type="match status" value="1"/>
</dbReference>
<dbReference type="Pfam" id="PF02675">
    <property type="entry name" value="AdoMet_dc"/>
    <property type="match status" value="1"/>
</dbReference>
<dbReference type="SUPFAM" id="SSF56276">
    <property type="entry name" value="S-adenosylmethionine decarboxylase"/>
    <property type="match status" value="1"/>
</dbReference>